<organism>
    <name type="scientific">Salmonella typhimurium (strain LT2 / SGSC1412 / ATCC 700720)</name>
    <dbReference type="NCBI Taxonomy" id="99287"/>
    <lineage>
        <taxon>Bacteria</taxon>
        <taxon>Pseudomonadati</taxon>
        <taxon>Pseudomonadota</taxon>
        <taxon>Gammaproteobacteria</taxon>
        <taxon>Enterobacterales</taxon>
        <taxon>Enterobacteriaceae</taxon>
        <taxon>Salmonella</taxon>
    </lineage>
</organism>
<reference key="1">
    <citation type="journal article" date="1988" name="Mol. Gen. Genet.">
        <title>Cloning and nucleotide sequence of the Salmonella typhimurium LT2 metF gene and its homology with the corresponding sequence of Escherichia coli.</title>
        <authorList>
            <person name="Stauffer G.V."/>
            <person name="Stauffer L.T."/>
        </authorList>
    </citation>
    <scope>NUCLEOTIDE SEQUENCE [GENOMIC DNA]</scope>
    <source>
        <strain>LT2</strain>
    </source>
</reference>
<reference key="2">
    <citation type="journal article" date="2001" name="Nature">
        <title>Complete genome sequence of Salmonella enterica serovar Typhimurium LT2.</title>
        <authorList>
            <person name="McClelland M."/>
            <person name="Sanderson K.E."/>
            <person name="Spieth J."/>
            <person name="Clifton S.W."/>
            <person name="Latreille P."/>
            <person name="Courtney L."/>
            <person name="Porwollik S."/>
            <person name="Ali J."/>
            <person name="Dante M."/>
            <person name="Du F."/>
            <person name="Hou S."/>
            <person name="Layman D."/>
            <person name="Leonard S."/>
            <person name="Nguyen C."/>
            <person name="Scott K."/>
            <person name="Holmes A."/>
            <person name="Grewal N."/>
            <person name="Mulvaney E."/>
            <person name="Ryan E."/>
            <person name="Sun H."/>
            <person name="Florea L."/>
            <person name="Miller W."/>
            <person name="Stoneking T."/>
            <person name="Nhan M."/>
            <person name="Waterston R."/>
            <person name="Wilson R.K."/>
        </authorList>
    </citation>
    <scope>NUCLEOTIDE SEQUENCE [LARGE SCALE GENOMIC DNA]</scope>
    <source>
        <strain>LT2 / SGSC1412 / ATCC 700720</strain>
    </source>
</reference>
<protein>
    <recommendedName>
        <fullName>5,10-methylenetetrahydrofolate reductase</fullName>
        <ecNumber evidence="1">1.5.1.54</ecNumber>
    </recommendedName>
</protein>
<sequence>MSFFHANQREALNQSLAEVQGQINVSFEFFPPRTSEMEQTLWNSIDRLSSLKPKFVSVTYGANSGERDRTHSVIKGIKERTGLEAAPHLTCIDATRDELRTIARDYWNNGIRHIVALRGDLPPGSGKPEMYAADLVGLLKEVADFDISVAAYPEVHPEAKSAQADLLNLKRKVDAGANRAITQFFFDVESYLRFRDRCVSAGIDVEIIPGILPVSNFKQAKKFADMTNVRIPSWMSLMFEGLDNDAETRKLVGANIAMDMVKILSREGVKDFHFYTLNRAEMSYAICHTLGVRPGL</sequence>
<evidence type="ECO:0000250" key="1">
    <source>
        <dbReference type="UniProtKB" id="P0AEZ1"/>
    </source>
</evidence>
<evidence type="ECO:0000305" key="2"/>
<gene>
    <name type="primary">metF</name>
    <name type="ordered locus">STM4105</name>
</gene>
<name>METF_SALTY</name>
<comment type="function">
    <text evidence="1">Catalyzes the NADH-dependent reduction of 5,10-methylenetetrahydrofolate to 5-methyltetrahydrofolate. Is required to provide the methyl group necessary for methionine synthetase to convert homocysteine to methionine; the methyl group is given by 5-methyltetrahydrofolate.</text>
</comment>
<comment type="catalytic activity">
    <reaction evidence="1">
        <text>(6S)-5-methyl-5,6,7,8-tetrahydrofolate + NAD(+) = (6R)-5,10-methylene-5,6,7,8-tetrahydrofolate + NADH + H(+)</text>
        <dbReference type="Rhea" id="RHEA:19821"/>
        <dbReference type="ChEBI" id="CHEBI:15378"/>
        <dbReference type="ChEBI" id="CHEBI:15636"/>
        <dbReference type="ChEBI" id="CHEBI:18608"/>
        <dbReference type="ChEBI" id="CHEBI:57540"/>
        <dbReference type="ChEBI" id="CHEBI:57945"/>
        <dbReference type="EC" id="1.5.1.54"/>
    </reaction>
    <physiologicalReaction direction="right-to-left" evidence="1">
        <dbReference type="Rhea" id="RHEA:19823"/>
    </physiologicalReaction>
</comment>
<comment type="cofactor">
    <cofactor evidence="1">
        <name>FAD</name>
        <dbReference type="ChEBI" id="CHEBI:57692"/>
    </cofactor>
</comment>
<comment type="pathway">
    <text>One-carbon metabolism; tetrahydrofolate interconversion.</text>
</comment>
<comment type="pathway">
    <text evidence="1">Amino-acid biosynthesis; L-methionine biosynthesis via de novo pathway.</text>
</comment>
<comment type="similarity">
    <text evidence="2">Belongs to the methylenetetrahydrofolate reductase family.</text>
</comment>
<dbReference type="EC" id="1.5.1.54" evidence="1"/>
<dbReference type="EMBL" id="X07689">
    <property type="protein sequence ID" value="CAA30531.1"/>
    <property type="molecule type" value="Genomic_DNA"/>
</dbReference>
<dbReference type="EMBL" id="AE006468">
    <property type="protein sequence ID" value="AAL22945.1"/>
    <property type="molecule type" value="Genomic_DNA"/>
</dbReference>
<dbReference type="PIR" id="S03169">
    <property type="entry name" value="S03169"/>
</dbReference>
<dbReference type="RefSeq" id="NP_462986.1">
    <property type="nucleotide sequence ID" value="NC_003197.2"/>
</dbReference>
<dbReference type="RefSeq" id="WP_000007508.1">
    <property type="nucleotide sequence ID" value="NC_003197.2"/>
</dbReference>
<dbReference type="SMR" id="P11003"/>
<dbReference type="STRING" id="99287.STM4105"/>
<dbReference type="PaxDb" id="99287-STM4105"/>
<dbReference type="GeneID" id="1255632"/>
<dbReference type="GeneID" id="44982653"/>
<dbReference type="KEGG" id="stm:STM4105"/>
<dbReference type="PATRIC" id="fig|99287.12.peg.4328"/>
<dbReference type="HOGENOM" id="CLU_025841_0_0_6"/>
<dbReference type="OMA" id="EMHPQAR"/>
<dbReference type="PhylomeDB" id="P11003"/>
<dbReference type="BioCyc" id="SENT99287:STM4105-MONOMER"/>
<dbReference type="UniPathway" id="UPA00051"/>
<dbReference type="UniPathway" id="UPA00193"/>
<dbReference type="Proteomes" id="UP000001014">
    <property type="component" value="Chromosome"/>
</dbReference>
<dbReference type="GO" id="GO:0005829">
    <property type="term" value="C:cytosol"/>
    <property type="evidence" value="ECO:0007669"/>
    <property type="project" value="InterPro"/>
</dbReference>
<dbReference type="GO" id="GO:0071949">
    <property type="term" value="F:FAD binding"/>
    <property type="evidence" value="ECO:0000318"/>
    <property type="project" value="GO_Central"/>
</dbReference>
<dbReference type="GO" id="GO:0004489">
    <property type="term" value="F:methylenetetrahydrofolate reductase (NAD(P)H) activity"/>
    <property type="evidence" value="ECO:0000318"/>
    <property type="project" value="GO_Central"/>
</dbReference>
<dbReference type="GO" id="GO:0106312">
    <property type="term" value="F:methylenetetrahydrofolate reductase (NADH) activity"/>
    <property type="evidence" value="ECO:0007669"/>
    <property type="project" value="RHEA"/>
</dbReference>
<dbReference type="GO" id="GO:0009086">
    <property type="term" value="P:methionine biosynthetic process"/>
    <property type="evidence" value="ECO:0000318"/>
    <property type="project" value="GO_Central"/>
</dbReference>
<dbReference type="GO" id="GO:0035999">
    <property type="term" value="P:tetrahydrofolate interconversion"/>
    <property type="evidence" value="ECO:0000318"/>
    <property type="project" value="GO_Central"/>
</dbReference>
<dbReference type="CDD" id="cd00537">
    <property type="entry name" value="MTHFR"/>
    <property type="match status" value="1"/>
</dbReference>
<dbReference type="FunFam" id="3.20.20.220:FF:000001">
    <property type="entry name" value="Methylenetetrahydrofolate reductase"/>
    <property type="match status" value="1"/>
</dbReference>
<dbReference type="Gene3D" id="3.20.20.220">
    <property type="match status" value="1"/>
</dbReference>
<dbReference type="InterPro" id="IPR029041">
    <property type="entry name" value="FAD-linked_oxidoreductase-like"/>
</dbReference>
<dbReference type="InterPro" id="IPR003171">
    <property type="entry name" value="Mehydrof_redctse-like"/>
</dbReference>
<dbReference type="InterPro" id="IPR004620">
    <property type="entry name" value="MTHF_reductase_bac"/>
</dbReference>
<dbReference type="NCBIfam" id="TIGR00676">
    <property type="entry name" value="fadh2"/>
    <property type="match status" value="1"/>
</dbReference>
<dbReference type="NCBIfam" id="NF006950">
    <property type="entry name" value="PRK09432.1"/>
    <property type="match status" value="1"/>
</dbReference>
<dbReference type="PANTHER" id="PTHR45754">
    <property type="entry name" value="METHYLENETETRAHYDROFOLATE REDUCTASE"/>
    <property type="match status" value="1"/>
</dbReference>
<dbReference type="PANTHER" id="PTHR45754:SF3">
    <property type="entry name" value="METHYLENETETRAHYDROFOLATE REDUCTASE (NADPH)"/>
    <property type="match status" value="1"/>
</dbReference>
<dbReference type="Pfam" id="PF02219">
    <property type="entry name" value="MTHFR"/>
    <property type="match status" value="1"/>
</dbReference>
<dbReference type="SUPFAM" id="SSF51730">
    <property type="entry name" value="FAD-linked oxidoreductase"/>
    <property type="match status" value="1"/>
</dbReference>
<proteinExistence type="inferred from homology"/>
<keyword id="KW-0028">Amino-acid biosynthesis</keyword>
<keyword id="KW-0274">FAD</keyword>
<keyword id="KW-0285">Flavoprotein</keyword>
<keyword id="KW-0486">Methionine biosynthesis</keyword>
<keyword id="KW-0520">NAD</keyword>
<keyword id="KW-0560">Oxidoreductase</keyword>
<keyword id="KW-1185">Reference proteome</keyword>
<accession>P11003</accession>
<feature type="chain" id="PRO_0000190264" description="5,10-methylenetetrahydrofolate reductase">
    <location>
        <begin position="1"/>
        <end position="296"/>
    </location>
</feature>
<feature type="active site" description="Proton donor/acceptor" evidence="1">
    <location>
        <position position="28"/>
    </location>
</feature>
<feature type="binding site" evidence="1">
    <location>
        <position position="59"/>
    </location>
    <ligand>
        <name>NADH</name>
        <dbReference type="ChEBI" id="CHEBI:57945"/>
    </ligand>
</feature>
<feature type="binding site" evidence="1">
    <location>
        <position position="60"/>
    </location>
    <ligand>
        <name>FAD</name>
        <dbReference type="ChEBI" id="CHEBI:57692"/>
    </ligand>
</feature>
<feature type="binding site" evidence="1">
    <location>
        <position position="62"/>
    </location>
    <ligand>
        <name>FAD</name>
        <dbReference type="ChEBI" id="CHEBI:57692"/>
    </ligand>
</feature>
<feature type="binding site" evidence="1">
    <location>
        <position position="88"/>
    </location>
    <ligand>
        <name>FAD</name>
        <dbReference type="ChEBI" id="CHEBI:57692"/>
    </ligand>
</feature>
<feature type="binding site" evidence="1">
    <location>
        <position position="118"/>
    </location>
    <ligand>
        <name>FAD</name>
        <dbReference type="ChEBI" id="CHEBI:57692"/>
    </ligand>
</feature>
<feature type="binding site" evidence="1">
    <location>
        <position position="119"/>
    </location>
    <ligand>
        <name>FAD</name>
        <dbReference type="ChEBI" id="CHEBI:57692"/>
    </ligand>
</feature>
<feature type="binding site" evidence="1">
    <location>
        <position position="120"/>
    </location>
    <ligand>
        <name>(6S)-5-methyl-5,6,7,8-tetrahydrofolate</name>
        <dbReference type="ChEBI" id="CHEBI:18608"/>
    </ligand>
</feature>
<feature type="binding site" evidence="1">
    <location>
        <position position="120"/>
    </location>
    <ligand>
        <name>FAD</name>
        <dbReference type="ChEBI" id="CHEBI:57692"/>
    </ligand>
</feature>
<feature type="binding site" evidence="1">
    <location>
        <position position="132"/>
    </location>
    <ligand>
        <name>FAD</name>
        <dbReference type="ChEBI" id="CHEBI:57692"/>
    </ligand>
</feature>
<feature type="binding site" evidence="1">
    <location>
        <position position="152"/>
    </location>
    <ligand>
        <name>FAD</name>
        <dbReference type="ChEBI" id="CHEBI:57692"/>
    </ligand>
</feature>
<feature type="binding site" evidence="1">
    <location>
        <position position="156"/>
    </location>
    <ligand>
        <name>FAD</name>
        <dbReference type="ChEBI" id="CHEBI:57692"/>
    </ligand>
</feature>
<feature type="binding site" evidence="1">
    <location>
        <position position="159"/>
    </location>
    <ligand>
        <name>FAD</name>
        <dbReference type="ChEBI" id="CHEBI:57692"/>
    </ligand>
</feature>
<feature type="binding site" evidence="1">
    <location>
        <position position="165"/>
    </location>
    <ligand>
        <name>FAD</name>
        <dbReference type="ChEBI" id="CHEBI:57692"/>
    </ligand>
</feature>
<feature type="binding site" evidence="1">
    <location>
        <position position="168"/>
    </location>
    <ligand>
        <name>FAD</name>
        <dbReference type="ChEBI" id="CHEBI:57692"/>
    </ligand>
</feature>
<feature type="binding site" evidence="1">
    <location>
        <position position="171"/>
    </location>
    <ligand>
        <name>FAD</name>
        <dbReference type="ChEBI" id="CHEBI:57692"/>
    </ligand>
</feature>
<feature type="binding site" evidence="1">
    <location>
        <position position="172"/>
    </location>
    <ligand>
        <name>FAD</name>
        <dbReference type="ChEBI" id="CHEBI:57692"/>
    </ligand>
</feature>
<feature type="binding site" evidence="1">
    <location>
        <position position="183"/>
    </location>
    <ligand>
        <name>(6S)-5-methyl-5,6,7,8-tetrahydrofolate</name>
        <dbReference type="ChEBI" id="CHEBI:18608"/>
    </ligand>
</feature>
<feature type="binding site" evidence="1">
    <location>
        <position position="183"/>
    </location>
    <ligand>
        <name>NADH</name>
        <dbReference type="ChEBI" id="CHEBI:57945"/>
    </ligand>
</feature>
<feature type="binding site" evidence="1">
    <location>
        <position position="219"/>
    </location>
    <ligand>
        <name>(6S)-5-methyl-5,6,7,8-tetrahydrofolate</name>
        <dbReference type="ChEBI" id="CHEBI:18608"/>
    </ligand>
</feature>
<feature type="binding site" evidence="1">
    <location>
        <position position="279"/>
    </location>
    <ligand>
        <name>(6S)-5-methyl-5,6,7,8-tetrahydrofolate</name>
        <dbReference type="ChEBI" id="CHEBI:18608"/>
    </ligand>
</feature>
<feature type="sequence conflict" description="In Ref. 1; CAA30531." evidence="2" ref="1">
    <original>A</original>
    <variation>P</variation>
    <location>
        <position position="94"/>
    </location>
</feature>